<evidence type="ECO:0000255" key="1">
    <source>
        <dbReference type="HAMAP-Rule" id="MF_01321"/>
    </source>
</evidence>
<evidence type="ECO:0000256" key="2">
    <source>
        <dbReference type="SAM" id="MobiDB-lite"/>
    </source>
</evidence>
<sequence>MATTIQNNFRIRRNFGKINKIAEIPNLIAIQKFSYDKFLQADVPPEKRDDTGLQGVFKSVFPIKDFNETSSLEFVSYHLEKPKYDVDECHQRGMTYSAPIKVVVRLVVWDKDEETGAQSIRDVKEQEVYFGEIPLMTENGTFIINGTERVVVSQLHRSPGAFFDHDKGKSHSSGKLLYNARIIPYRGSWIDFEFDHKDILYVRIDRRRKLPATVLLRALGATPDTAKKDPVEFHGSAEEILKYYYDTETIRVEGKGKFEKDLVPDLLKGQRATRDIRDPKSSEVIVKKNRKYTESAIKKLVAAKMKSLPVEPEEVYTKISAEDVVDETTGEVLLEVNEEVTEAKVEELRKRNINEFKVLFIDNLNILPALRDTLMQDKISTPEEAIMEIYRRLRPGDPPTPETATNLFVNLFFNAERYDLSKVGRLKLNYKFGIEEPLENTVLTKRDILEVVRFLIDLKNGKPNKDVDDIDHLGNRRVRAVGELLENQYRIGLVRMERAIKERMSLQEIETLMPHDLINAKPVTAVIKEFFGSSQLSQFMDQTNPLSEVTHKRRLSALGPGGLTRERAGFEVRDVHSTHYGRICPIETPEGPNIGLIASLSTYARVNEYGFVETPYRKVEKGRVTDEVTFYSALEEEKHIIAQANAPVDKKGNFTEAKVWCRKEGEYIYVRPDEVDLMDVSPNQLVSVAASLVPFLENDDANRALMGSNMQRQAVPLLRTQAPLVGTGIEAIVARDSGVTTVAKRDGVVQSVDASRIVVKADVPTSATDVANEVDIYNLIKYQRSNQNTCINQKPIVKPGERVRKGDVIADGPATEMGELALGQNVVVAFMPWQGYNFEDSILLSERLIKEDVFTSVHIEEFECVARDTKLGKEEITRDIPNVGEEALKDLDESGIIRIGAEVKPGDILVGKITPKGETQLSPEEKLLRAIFGEKAGDVRDSSLRVPPGVSGTVINAKVFSRKGVEKDERAKAIEEMEEAKLLKDQNDEIRIIQDSAFQKIRRLLLGKEVTARLVDDKGEQLLKKGDVLDDALLDTVPQRYWGEIAVAGDVQDLARKIIDNFEEQKELVKLLFGEKIGRLKKGDELPPGVIKMVKVYVAIKRKLAVGDKMAGRHGNKGVVSRVLPEEDLPYLEDGTPVDIVLNPLGVPSRMNVGQILETHLGWAARNVGLRLQEMIEKEYGPEQLRKKLRAAFAGTEGGPASDRLAALIDDVPEKELPKLAQKLRRGMHVATPVFDGAREDEMKALMEEGSATLQSILFDGRTGEPFDQDVTVGVMYMLKLHHLVDEKIHARSIGPYSLVTQQPLGGKAQFGGQRLGEMEVWAMEAYGAAYSLQEFLTVKSDDVVGRTRMYEAIVKGENTLESGLPESFNVLIKELQSLALDVELLETPEAQAAREAAERDLGGGPLGAPRGAVASGEKSSA</sequence>
<protein>
    <recommendedName>
        <fullName evidence="1">DNA-directed RNA polymerase subunit beta</fullName>
        <shortName evidence="1">RNAP subunit beta</shortName>
        <ecNumber evidence="1">2.7.7.6</ecNumber>
    </recommendedName>
    <alternativeName>
        <fullName evidence="1">RNA polymerase subunit beta</fullName>
    </alternativeName>
    <alternativeName>
        <fullName evidence="1">Transcriptase subunit beta</fullName>
    </alternativeName>
</protein>
<comment type="function">
    <text evidence="1">DNA-dependent RNA polymerase catalyzes the transcription of DNA into RNA using the four ribonucleoside triphosphates as substrates.</text>
</comment>
<comment type="catalytic activity">
    <reaction evidence="1">
        <text>RNA(n) + a ribonucleoside 5'-triphosphate = RNA(n+1) + diphosphate</text>
        <dbReference type="Rhea" id="RHEA:21248"/>
        <dbReference type="Rhea" id="RHEA-COMP:14527"/>
        <dbReference type="Rhea" id="RHEA-COMP:17342"/>
        <dbReference type="ChEBI" id="CHEBI:33019"/>
        <dbReference type="ChEBI" id="CHEBI:61557"/>
        <dbReference type="ChEBI" id="CHEBI:140395"/>
        <dbReference type="EC" id="2.7.7.6"/>
    </reaction>
</comment>
<comment type="subunit">
    <text evidence="1">The RNAP catalytic core consists of 2 alpha, 1 beta, 1 beta' and 1 omega subunit. When a sigma factor is associated with the core the holoenzyme is formed, which can initiate transcription.</text>
</comment>
<comment type="similarity">
    <text evidence="1">Belongs to the RNA polymerase beta chain family.</text>
</comment>
<organism>
    <name type="scientific">Anaeromyxobacter dehalogenans (strain 2CP-C)</name>
    <dbReference type="NCBI Taxonomy" id="290397"/>
    <lineage>
        <taxon>Bacteria</taxon>
        <taxon>Pseudomonadati</taxon>
        <taxon>Myxococcota</taxon>
        <taxon>Myxococcia</taxon>
        <taxon>Myxococcales</taxon>
        <taxon>Cystobacterineae</taxon>
        <taxon>Anaeromyxobacteraceae</taxon>
        <taxon>Anaeromyxobacter</taxon>
    </lineage>
</organism>
<dbReference type="EC" id="2.7.7.6" evidence="1"/>
<dbReference type="EMBL" id="CP000251">
    <property type="protein sequence ID" value="ABC81365.1"/>
    <property type="molecule type" value="Genomic_DNA"/>
</dbReference>
<dbReference type="RefSeq" id="WP_011420648.1">
    <property type="nucleotide sequence ID" value="NC_007760.1"/>
</dbReference>
<dbReference type="SMR" id="Q2II86"/>
<dbReference type="STRING" id="290397.Adeh_1592"/>
<dbReference type="KEGG" id="ade:Adeh_1592"/>
<dbReference type="eggNOG" id="COG0085">
    <property type="taxonomic scope" value="Bacteria"/>
</dbReference>
<dbReference type="HOGENOM" id="CLU_000524_4_0_7"/>
<dbReference type="OrthoDB" id="9803954at2"/>
<dbReference type="Proteomes" id="UP000001935">
    <property type="component" value="Chromosome"/>
</dbReference>
<dbReference type="GO" id="GO:0000428">
    <property type="term" value="C:DNA-directed RNA polymerase complex"/>
    <property type="evidence" value="ECO:0007669"/>
    <property type="project" value="UniProtKB-KW"/>
</dbReference>
<dbReference type="GO" id="GO:0003677">
    <property type="term" value="F:DNA binding"/>
    <property type="evidence" value="ECO:0007669"/>
    <property type="project" value="UniProtKB-UniRule"/>
</dbReference>
<dbReference type="GO" id="GO:0003899">
    <property type="term" value="F:DNA-directed RNA polymerase activity"/>
    <property type="evidence" value="ECO:0007669"/>
    <property type="project" value="UniProtKB-UniRule"/>
</dbReference>
<dbReference type="GO" id="GO:0032549">
    <property type="term" value="F:ribonucleoside binding"/>
    <property type="evidence" value="ECO:0007669"/>
    <property type="project" value="InterPro"/>
</dbReference>
<dbReference type="GO" id="GO:0006351">
    <property type="term" value="P:DNA-templated transcription"/>
    <property type="evidence" value="ECO:0007669"/>
    <property type="project" value="UniProtKB-UniRule"/>
</dbReference>
<dbReference type="CDD" id="cd00653">
    <property type="entry name" value="RNA_pol_B_RPB2"/>
    <property type="match status" value="1"/>
</dbReference>
<dbReference type="FunFam" id="2.40.50.100:FF:000006">
    <property type="entry name" value="DNA-directed RNA polymerase subunit beta"/>
    <property type="match status" value="1"/>
</dbReference>
<dbReference type="FunFam" id="3.90.1800.10:FF:000001">
    <property type="entry name" value="DNA-directed RNA polymerase subunit beta"/>
    <property type="match status" value="1"/>
</dbReference>
<dbReference type="Gene3D" id="2.40.50.100">
    <property type="match status" value="1"/>
</dbReference>
<dbReference type="Gene3D" id="2.40.50.150">
    <property type="match status" value="1"/>
</dbReference>
<dbReference type="Gene3D" id="3.90.1100.10">
    <property type="match status" value="2"/>
</dbReference>
<dbReference type="Gene3D" id="2.30.150.10">
    <property type="entry name" value="DNA-directed RNA polymerase, beta subunit, external 1 domain"/>
    <property type="match status" value="1"/>
</dbReference>
<dbReference type="Gene3D" id="2.40.270.10">
    <property type="entry name" value="DNA-directed RNA polymerase, subunit 2, domain 6"/>
    <property type="match status" value="2"/>
</dbReference>
<dbReference type="Gene3D" id="3.90.1800.10">
    <property type="entry name" value="RNA polymerase alpha subunit dimerisation domain"/>
    <property type="match status" value="1"/>
</dbReference>
<dbReference type="Gene3D" id="3.90.1110.10">
    <property type="entry name" value="RNA polymerase Rpb2, domain 2"/>
    <property type="match status" value="1"/>
</dbReference>
<dbReference type="HAMAP" id="MF_01321">
    <property type="entry name" value="RNApol_bact_RpoB"/>
    <property type="match status" value="1"/>
</dbReference>
<dbReference type="InterPro" id="IPR042107">
    <property type="entry name" value="DNA-dir_RNA_pol_bsu_ext_1_sf"/>
</dbReference>
<dbReference type="InterPro" id="IPR019462">
    <property type="entry name" value="DNA-dir_RNA_pol_bsu_external_1"/>
</dbReference>
<dbReference type="InterPro" id="IPR015712">
    <property type="entry name" value="DNA-dir_RNA_pol_su2"/>
</dbReference>
<dbReference type="InterPro" id="IPR007120">
    <property type="entry name" value="DNA-dir_RNAP_su2_dom"/>
</dbReference>
<dbReference type="InterPro" id="IPR037033">
    <property type="entry name" value="DNA-dir_RNAP_su2_hyb_sf"/>
</dbReference>
<dbReference type="InterPro" id="IPR010243">
    <property type="entry name" value="RNA_pol_bsu_bac"/>
</dbReference>
<dbReference type="InterPro" id="IPR007121">
    <property type="entry name" value="RNA_pol_bsu_CS"/>
</dbReference>
<dbReference type="InterPro" id="IPR007644">
    <property type="entry name" value="RNA_pol_bsu_protrusion"/>
</dbReference>
<dbReference type="InterPro" id="IPR007642">
    <property type="entry name" value="RNA_pol_Rpb2_2"/>
</dbReference>
<dbReference type="InterPro" id="IPR037034">
    <property type="entry name" value="RNA_pol_Rpb2_2_sf"/>
</dbReference>
<dbReference type="InterPro" id="IPR007645">
    <property type="entry name" value="RNA_pol_Rpb2_3"/>
</dbReference>
<dbReference type="InterPro" id="IPR007641">
    <property type="entry name" value="RNA_pol_Rpb2_7"/>
</dbReference>
<dbReference type="InterPro" id="IPR014724">
    <property type="entry name" value="RNA_pol_RPB2_OB-fold"/>
</dbReference>
<dbReference type="NCBIfam" id="NF001616">
    <property type="entry name" value="PRK00405.1"/>
    <property type="match status" value="1"/>
</dbReference>
<dbReference type="NCBIfam" id="TIGR02013">
    <property type="entry name" value="rpoB"/>
    <property type="match status" value="1"/>
</dbReference>
<dbReference type="PANTHER" id="PTHR20856">
    <property type="entry name" value="DNA-DIRECTED RNA POLYMERASE I SUBUNIT 2"/>
    <property type="match status" value="1"/>
</dbReference>
<dbReference type="Pfam" id="PF04563">
    <property type="entry name" value="RNA_pol_Rpb2_1"/>
    <property type="match status" value="1"/>
</dbReference>
<dbReference type="Pfam" id="PF04561">
    <property type="entry name" value="RNA_pol_Rpb2_2"/>
    <property type="match status" value="2"/>
</dbReference>
<dbReference type="Pfam" id="PF04565">
    <property type="entry name" value="RNA_pol_Rpb2_3"/>
    <property type="match status" value="1"/>
</dbReference>
<dbReference type="Pfam" id="PF10385">
    <property type="entry name" value="RNA_pol_Rpb2_45"/>
    <property type="match status" value="1"/>
</dbReference>
<dbReference type="Pfam" id="PF00562">
    <property type="entry name" value="RNA_pol_Rpb2_6"/>
    <property type="match status" value="1"/>
</dbReference>
<dbReference type="Pfam" id="PF04560">
    <property type="entry name" value="RNA_pol_Rpb2_7"/>
    <property type="match status" value="1"/>
</dbReference>
<dbReference type="SUPFAM" id="SSF64484">
    <property type="entry name" value="beta and beta-prime subunits of DNA dependent RNA-polymerase"/>
    <property type="match status" value="1"/>
</dbReference>
<dbReference type="PROSITE" id="PS01166">
    <property type="entry name" value="RNA_POL_BETA"/>
    <property type="match status" value="1"/>
</dbReference>
<proteinExistence type="inferred from homology"/>
<keyword id="KW-0240">DNA-directed RNA polymerase</keyword>
<keyword id="KW-0548">Nucleotidyltransferase</keyword>
<keyword id="KW-1185">Reference proteome</keyword>
<keyword id="KW-0804">Transcription</keyword>
<keyword id="KW-0808">Transferase</keyword>
<feature type="chain" id="PRO_0000237295" description="DNA-directed RNA polymerase subunit beta">
    <location>
        <begin position="1"/>
        <end position="1422"/>
    </location>
</feature>
<feature type="region of interest" description="Disordered" evidence="2">
    <location>
        <begin position="1392"/>
        <end position="1422"/>
    </location>
</feature>
<accession>Q2II86</accession>
<name>RPOB_ANADE</name>
<reference key="1">
    <citation type="submission" date="2006-01" db="EMBL/GenBank/DDBJ databases">
        <title>Complete sequence of Anaeromyxobacter dehalogenans 2CP-C.</title>
        <authorList>
            <person name="Copeland A."/>
            <person name="Lucas S."/>
            <person name="Lapidus A."/>
            <person name="Barry K."/>
            <person name="Detter J.C."/>
            <person name="Glavina T."/>
            <person name="Hammon N."/>
            <person name="Israni S."/>
            <person name="Pitluck S."/>
            <person name="Brettin T."/>
            <person name="Bruce D."/>
            <person name="Han C."/>
            <person name="Tapia R."/>
            <person name="Gilna P."/>
            <person name="Kiss H."/>
            <person name="Schmutz J."/>
            <person name="Larimer F."/>
            <person name="Land M."/>
            <person name="Kyrpides N."/>
            <person name="Anderson I."/>
            <person name="Sanford R.A."/>
            <person name="Ritalahti K.M."/>
            <person name="Thomas H.S."/>
            <person name="Kirby J.R."/>
            <person name="Zhulin I.B."/>
            <person name="Loeffler F.E."/>
            <person name="Richardson P."/>
        </authorList>
    </citation>
    <scope>NUCLEOTIDE SEQUENCE [LARGE SCALE GENOMIC DNA]</scope>
    <source>
        <strain>2CP-C</strain>
    </source>
</reference>
<gene>
    <name evidence="1" type="primary">rpoB</name>
    <name type="ordered locus">Adeh_1592</name>
</gene>